<protein>
    <recommendedName>
        <fullName evidence="1">Protein ApaG</fullName>
    </recommendedName>
</protein>
<proteinExistence type="inferred from homology"/>
<dbReference type="EMBL" id="CP000908">
    <property type="protein sequence ID" value="ABY28792.1"/>
    <property type="molecule type" value="Genomic_DNA"/>
</dbReference>
<dbReference type="RefSeq" id="WP_003601773.1">
    <property type="nucleotide sequence ID" value="NC_010172.1"/>
</dbReference>
<dbReference type="SMR" id="A9VZN6"/>
<dbReference type="GeneID" id="72987759"/>
<dbReference type="KEGG" id="mex:Mext_0370"/>
<dbReference type="eggNOG" id="COG2967">
    <property type="taxonomic scope" value="Bacteria"/>
</dbReference>
<dbReference type="HOGENOM" id="CLU_128074_1_0_5"/>
<dbReference type="BioCyc" id="MEXT419610:MEXT_RS01835-MONOMER"/>
<dbReference type="GO" id="GO:0070987">
    <property type="term" value="P:error-free translesion synthesis"/>
    <property type="evidence" value="ECO:0007669"/>
    <property type="project" value="TreeGrafter"/>
</dbReference>
<dbReference type="Gene3D" id="2.60.40.1470">
    <property type="entry name" value="ApaG domain"/>
    <property type="match status" value="1"/>
</dbReference>
<dbReference type="HAMAP" id="MF_00791">
    <property type="entry name" value="ApaG"/>
    <property type="match status" value="1"/>
</dbReference>
<dbReference type="InterPro" id="IPR007474">
    <property type="entry name" value="ApaG_domain"/>
</dbReference>
<dbReference type="InterPro" id="IPR036767">
    <property type="entry name" value="ApaG_sf"/>
</dbReference>
<dbReference type="InterPro" id="IPR023065">
    <property type="entry name" value="Uncharacterised_ApaG"/>
</dbReference>
<dbReference type="NCBIfam" id="NF003967">
    <property type="entry name" value="PRK05461.1"/>
    <property type="match status" value="1"/>
</dbReference>
<dbReference type="PANTHER" id="PTHR14289">
    <property type="entry name" value="F-BOX ONLY PROTEIN 3"/>
    <property type="match status" value="1"/>
</dbReference>
<dbReference type="PANTHER" id="PTHR14289:SF16">
    <property type="entry name" value="POLYMERASE DELTA-INTERACTING PROTEIN 2"/>
    <property type="match status" value="1"/>
</dbReference>
<dbReference type="Pfam" id="PF04379">
    <property type="entry name" value="DUF525"/>
    <property type="match status" value="1"/>
</dbReference>
<dbReference type="SUPFAM" id="SSF110069">
    <property type="entry name" value="ApaG-like"/>
    <property type="match status" value="1"/>
</dbReference>
<dbReference type="PROSITE" id="PS51087">
    <property type="entry name" value="APAG"/>
    <property type="match status" value="1"/>
</dbReference>
<reference key="1">
    <citation type="submission" date="2007-12" db="EMBL/GenBank/DDBJ databases">
        <title>Complete sequence of Methylobacterium extorquens PA1.</title>
        <authorList>
            <consortium name="US DOE Joint Genome Institute"/>
            <person name="Copeland A."/>
            <person name="Lucas S."/>
            <person name="Lapidus A."/>
            <person name="Barry K."/>
            <person name="Glavina del Rio T."/>
            <person name="Dalin E."/>
            <person name="Tice H."/>
            <person name="Pitluck S."/>
            <person name="Saunders E."/>
            <person name="Brettin T."/>
            <person name="Bruce D."/>
            <person name="Detter J.C."/>
            <person name="Han C."/>
            <person name="Schmutz J."/>
            <person name="Larimer F."/>
            <person name="Land M."/>
            <person name="Hauser L."/>
            <person name="Kyrpides N."/>
            <person name="Kim E."/>
            <person name="Marx C."/>
            <person name="Richardson P."/>
        </authorList>
    </citation>
    <scope>NUCLEOTIDE SEQUENCE [LARGE SCALE GENOMIC DNA]</scope>
    <source>
        <strain>PA1</strain>
    </source>
</reference>
<feature type="chain" id="PRO_1000133795" description="Protein ApaG">
    <location>
        <begin position="1"/>
        <end position="130"/>
    </location>
</feature>
<feature type="domain" description="ApaG" evidence="1">
    <location>
        <begin position="3"/>
        <end position="127"/>
    </location>
</feature>
<sequence length="130" mass="14319">MYKAETRGIMVTVEPRFVEEESSPGESRYFFAYTVEIVNNGSEQVQLRSRHWRIIDGRGACQEVRGAGVVGKQPVLEPGESFSYTSGCPLTTPDGLMAGSYTMSTIGGESFEAEIPAFSLDSPHLRRVVH</sequence>
<name>APAG_METEP</name>
<organism>
    <name type="scientific">Methylorubrum extorquens (strain PA1)</name>
    <name type="common">Methylobacterium extorquens</name>
    <dbReference type="NCBI Taxonomy" id="419610"/>
    <lineage>
        <taxon>Bacteria</taxon>
        <taxon>Pseudomonadati</taxon>
        <taxon>Pseudomonadota</taxon>
        <taxon>Alphaproteobacteria</taxon>
        <taxon>Hyphomicrobiales</taxon>
        <taxon>Methylobacteriaceae</taxon>
        <taxon>Methylorubrum</taxon>
    </lineage>
</organism>
<accession>A9VZN6</accession>
<evidence type="ECO:0000255" key="1">
    <source>
        <dbReference type="HAMAP-Rule" id="MF_00791"/>
    </source>
</evidence>
<gene>
    <name evidence="1" type="primary">apaG</name>
    <name type="ordered locus">Mext_0370</name>
</gene>